<organism>
    <name type="scientific">Rattus norvegicus</name>
    <name type="common">Rat</name>
    <dbReference type="NCBI Taxonomy" id="10116"/>
    <lineage>
        <taxon>Eukaryota</taxon>
        <taxon>Metazoa</taxon>
        <taxon>Chordata</taxon>
        <taxon>Craniata</taxon>
        <taxon>Vertebrata</taxon>
        <taxon>Euteleostomi</taxon>
        <taxon>Mammalia</taxon>
        <taxon>Eutheria</taxon>
        <taxon>Euarchontoglires</taxon>
        <taxon>Glires</taxon>
        <taxon>Rodentia</taxon>
        <taxon>Myomorpha</taxon>
        <taxon>Muroidea</taxon>
        <taxon>Muridae</taxon>
        <taxon>Murinae</taxon>
        <taxon>Rattus</taxon>
    </lineage>
</organism>
<sequence length="177" mass="19726">MKALLLTFGLSLLAALQAQAFPTTEENQDVSGTWYLKAAAWDKEIPDKKFGSVSVTPMKIKTLEGGNLQVKFTVLIAGRCKEMSTVLEKTDEPAKYTAYSGKQVLYIIPSSVEDHYIFYYEGKIHRHHFQIAKLVGRDPEINQEALEDFQSVVRAGGLNPDNIFIPKQSETCPLGSN</sequence>
<dbReference type="EMBL" id="X52016">
    <property type="protein sequence ID" value="CAA36263.1"/>
    <property type="molecule type" value="mRNA"/>
</dbReference>
<dbReference type="EMBL" id="X74805">
    <property type="protein sequence ID" value="CAA52809.1"/>
    <property type="molecule type" value="Genomic_DNA"/>
</dbReference>
<dbReference type="PIR" id="S08161">
    <property type="entry name" value="S08161"/>
</dbReference>
<dbReference type="RefSeq" id="NP_075234.1">
    <property type="nucleotide sequence ID" value="NM_022945.1"/>
</dbReference>
<dbReference type="SMR" id="P20289"/>
<dbReference type="FunCoup" id="P20289">
    <property type="interactions" value="1"/>
</dbReference>
<dbReference type="STRING" id="10116.ENSRNOP00000041023"/>
<dbReference type="iPTMnet" id="P20289"/>
<dbReference type="PhosphoSitePlus" id="P20289"/>
<dbReference type="PaxDb" id="10116-ENSRNOP00000041023"/>
<dbReference type="Ensembl" id="ENSRNOT00000041399.5">
    <property type="protein sequence ID" value="ENSRNOP00000043245.5"/>
    <property type="gene ID" value="ENSRNOG00000033020.5"/>
</dbReference>
<dbReference type="GeneID" id="65039"/>
<dbReference type="KEGG" id="rno:65039"/>
<dbReference type="UCSC" id="RGD:619872">
    <property type="organism name" value="rat"/>
</dbReference>
<dbReference type="AGR" id="RGD:619872"/>
<dbReference type="CTD" id="3933"/>
<dbReference type="RGD" id="619872">
    <property type="gene designation" value="Vegp1"/>
</dbReference>
<dbReference type="VEuPathDB" id="HostDB:ENSRNOG00000033761"/>
<dbReference type="eggNOG" id="ENOG502S22P">
    <property type="taxonomic scope" value="Eukaryota"/>
</dbReference>
<dbReference type="HOGENOM" id="CLU_125034_0_0_1"/>
<dbReference type="InParanoid" id="P20289"/>
<dbReference type="OMA" id="TMLISGW"/>
<dbReference type="OrthoDB" id="80611at9989"/>
<dbReference type="PhylomeDB" id="P20289"/>
<dbReference type="TreeFam" id="TF338197"/>
<dbReference type="Reactome" id="R-RNO-804914">
    <property type="pathway name" value="Transport of fatty acids"/>
</dbReference>
<dbReference type="PRO" id="PR:P20289"/>
<dbReference type="Proteomes" id="UP000002494">
    <property type="component" value="Chromosome 3"/>
</dbReference>
<dbReference type="Bgee" id="ENSRNOG00000033761">
    <property type="expression patterns" value="Expressed in testis and 4 other cell types or tissues"/>
</dbReference>
<dbReference type="GO" id="GO:0005615">
    <property type="term" value="C:extracellular space"/>
    <property type="evidence" value="ECO:0000266"/>
    <property type="project" value="RGD"/>
</dbReference>
<dbReference type="GO" id="GO:0031404">
    <property type="term" value="F:chloride ion binding"/>
    <property type="evidence" value="ECO:0000266"/>
    <property type="project" value="RGD"/>
</dbReference>
<dbReference type="GO" id="GO:0042802">
    <property type="term" value="F:identical protein binding"/>
    <property type="evidence" value="ECO:0000266"/>
    <property type="project" value="RGD"/>
</dbReference>
<dbReference type="GO" id="GO:0005102">
    <property type="term" value="F:signaling receptor binding"/>
    <property type="evidence" value="ECO:0000266"/>
    <property type="project" value="RGD"/>
</dbReference>
<dbReference type="GO" id="GO:0008270">
    <property type="term" value="F:zinc ion binding"/>
    <property type="evidence" value="ECO:0000266"/>
    <property type="project" value="RGD"/>
</dbReference>
<dbReference type="GO" id="GO:0050909">
    <property type="term" value="P:sensory perception of taste"/>
    <property type="evidence" value="ECO:0007669"/>
    <property type="project" value="UniProtKB-KW"/>
</dbReference>
<dbReference type="CDD" id="cd19414">
    <property type="entry name" value="lipocalin_1_3_4_13-like"/>
    <property type="match status" value="1"/>
</dbReference>
<dbReference type="Gene3D" id="2.40.128.20">
    <property type="match status" value="1"/>
</dbReference>
<dbReference type="InterPro" id="IPR012674">
    <property type="entry name" value="Calycin"/>
</dbReference>
<dbReference type="InterPro" id="IPR002345">
    <property type="entry name" value="Lipocalin"/>
</dbReference>
<dbReference type="InterPro" id="IPR000566">
    <property type="entry name" value="Lipocln_cytosolic_FA-bd_dom"/>
</dbReference>
<dbReference type="InterPro" id="IPR002450">
    <property type="entry name" value="von_Ebner_gland"/>
</dbReference>
<dbReference type="PANTHER" id="PTHR11430">
    <property type="entry name" value="LIPOCALIN"/>
    <property type="match status" value="1"/>
</dbReference>
<dbReference type="PANTHER" id="PTHR11430:SF124">
    <property type="entry name" value="LIPOCALIN 1-LIKE PROTEIN 1-RELATED"/>
    <property type="match status" value="1"/>
</dbReference>
<dbReference type="Pfam" id="PF00061">
    <property type="entry name" value="Lipocalin"/>
    <property type="match status" value="1"/>
</dbReference>
<dbReference type="PRINTS" id="PR01175">
    <property type="entry name" value="VNEBNERGLAND"/>
</dbReference>
<dbReference type="SUPFAM" id="SSF50814">
    <property type="entry name" value="Lipocalins"/>
    <property type="match status" value="1"/>
</dbReference>
<proteinExistence type="evidence at transcript level"/>
<protein>
    <recommendedName>
        <fullName>von Ebner gland protein 1</fullName>
        <shortName>VEG protein 1</shortName>
    </recommendedName>
</protein>
<name>VEGP1_RAT</name>
<gene>
    <name type="primary">Vegp1</name>
    <name type="synonym">Vegp</name>
</gene>
<evidence type="ECO:0000250" key="1"/>
<evidence type="ECO:0000255" key="2"/>
<evidence type="ECO:0000305" key="3"/>
<feature type="signal peptide" evidence="2">
    <location>
        <begin position="1"/>
        <end position="18"/>
    </location>
</feature>
<feature type="chain" id="PRO_0000017976" description="von Ebner gland protein 1">
    <location>
        <begin position="19"/>
        <end position="177"/>
    </location>
</feature>
<feature type="disulfide bond" evidence="1">
    <location>
        <begin position="80"/>
        <end position="172"/>
    </location>
</feature>
<reference key="1">
    <citation type="journal article" date="1990" name="Nature">
        <title>Possible role for salivary gland protein in taste reception indicated by homology to lipophilic-ligand carrier proteins.</title>
        <authorList>
            <person name="Schmale H."/>
            <person name="Holtgreve-Grez H."/>
            <person name="Christiansen H."/>
        </authorList>
    </citation>
    <scope>NUCLEOTIDE SEQUENCE [MRNA]</scope>
    <source>
        <strain>Wistar</strain>
        <tissue>Lingual salivary gland</tissue>
    </source>
</reference>
<reference key="2">
    <citation type="journal article" date="1994" name="Eur. J. Biochem.">
        <title>Structural organization of the genes for rat von Ebner's gland proteins 1 and 2 reveals their close relationship to lipocalins.</title>
        <authorList>
            <person name="Kock K."/>
            <person name="Ahlers C."/>
            <person name="Schmale H."/>
        </authorList>
    </citation>
    <scope>NUCLEOTIDE SEQUENCE [GENOMIC DNA]</scope>
    <source>
        <strain>Wistar</strain>
        <tissue>Lingual salivary gland</tissue>
    </source>
</reference>
<comment type="function">
    <text>Could play a role in taste reception. Could be necessary for the concentration and delivery of sapid molecules in the gustatory system.</text>
</comment>
<comment type="subunit">
    <text evidence="1">Homodimer.</text>
</comment>
<comment type="subcellular location">
    <subcellularLocation>
        <location>Secreted</location>
    </subcellularLocation>
</comment>
<comment type="similarity">
    <text evidence="3">Belongs to the calycin superfamily. Lipocalin family.</text>
</comment>
<keyword id="KW-1015">Disulfide bond</keyword>
<keyword id="KW-1185">Reference proteome</keyword>
<keyword id="KW-0964">Secreted</keyword>
<keyword id="KW-0716">Sensory transduction</keyword>
<keyword id="KW-0732">Signal</keyword>
<keyword id="KW-0919">Taste</keyword>
<keyword id="KW-0813">Transport</keyword>
<accession>P20289</accession>